<protein>
    <recommendedName>
        <fullName evidence="1">Large ribosomal subunit protein uL11</fullName>
    </recommendedName>
    <alternativeName>
        <fullName evidence="2">50S ribosomal protein L11</fullName>
    </alternativeName>
</protein>
<feature type="chain" id="PRO_0000258199" description="Large ribosomal subunit protein uL11">
    <location>
        <begin position="1"/>
        <end position="143"/>
    </location>
</feature>
<organism>
    <name type="scientific">Albidiferax ferrireducens (strain ATCC BAA-621 / DSM 15236 / T118)</name>
    <name type="common">Rhodoferax ferrireducens</name>
    <dbReference type="NCBI Taxonomy" id="338969"/>
    <lineage>
        <taxon>Bacteria</taxon>
        <taxon>Pseudomonadati</taxon>
        <taxon>Pseudomonadota</taxon>
        <taxon>Betaproteobacteria</taxon>
        <taxon>Burkholderiales</taxon>
        <taxon>Comamonadaceae</taxon>
        <taxon>Rhodoferax</taxon>
    </lineage>
</organism>
<name>RL11_ALBFT</name>
<dbReference type="EMBL" id="CP000267">
    <property type="protein sequence ID" value="ABD71300.1"/>
    <property type="molecule type" value="Genomic_DNA"/>
</dbReference>
<dbReference type="RefSeq" id="WP_011465863.1">
    <property type="nucleotide sequence ID" value="NC_007908.1"/>
</dbReference>
<dbReference type="SMR" id="Q21SF3"/>
<dbReference type="STRING" id="338969.Rfer_3596"/>
<dbReference type="KEGG" id="rfr:Rfer_3596"/>
<dbReference type="eggNOG" id="COG0080">
    <property type="taxonomic scope" value="Bacteria"/>
</dbReference>
<dbReference type="HOGENOM" id="CLU_074237_2_0_4"/>
<dbReference type="OrthoDB" id="9802408at2"/>
<dbReference type="Proteomes" id="UP000008332">
    <property type="component" value="Chromosome"/>
</dbReference>
<dbReference type="GO" id="GO:0022625">
    <property type="term" value="C:cytosolic large ribosomal subunit"/>
    <property type="evidence" value="ECO:0007669"/>
    <property type="project" value="TreeGrafter"/>
</dbReference>
<dbReference type="GO" id="GO:0070180">
    <property type="term" value="F:large ribosomal subunit rRNA binding"/>
    <property type="evidence" value="ECO:0007669"/>
    <property type="project" value="UniProtKB-UniRule"/>
</dbReference>
<dbReference type="GO" id="GO:0003735">
    <property type="term" value="F:structural constituent of ribosome"/>
    <property type="evidence" value="ECO:0007669"/>
    <property type="project" value="InterPro"/>
</dbReference>
<dbReference type="GO" id="GO:0006412">
    <property type="term" value="P:translation"/>
    <property type="evidence" value="ECO:0007669"/>
    <property type="project" value="UniProtKB-UniRule"/>
</dbReference>
<dbReference type="CDD" id="cd00349">
    <property type="entry name" value="Ribosomal_L11"/>
    <property type="match status" value="1"/>
</dbReference>
<dbReference type="FunFam" id="1.10.10.250:FF:000001">
    <property type="entry name" value="50S ribosomal protein L11"/>
    <property type="match status" value="1"/>
</dbReference>
<dbReference type="FunFam" id="3.30.1550.10:FF:000001">
    <property type="entry name" value="50S ribosomal protein L11"/>
    <property type="match status" value="1"/>
</dbReference>
<dbReference type="Gene3D" id="1.10.10.250">
    <property type="entry name" value="Ribosomal protein L11, C-terminal domain"/>
    <property type="match status" value="1"/>
</dbReference>
<dbReference type="Gene3D" id="3.30.1550.10">
    <property type="entry name" value="Ribosomal protein L11/L12, N-terminal domain"/>
    <property type="match status" value="1"/>
</dbReference>
<dbReference type="HAMAP" id="MF_00736">
    <property type="entry name" value="Ribosomal_uL11"/>
    <property type="match status" value="1"/>
</dbReference>
<dbReference type="InterPro" id="IPR000911">
    <property type="entry name" value="Ribosomal_uL11"/>
</dbReference>
<dbReference type="InterPro" id="IPR006519">
    <property type="entry name" value="Ribosomal_uL11_bac-typ"/>
</dbReference>
<dbReference type="InterPro" id="IPR020783">
    <property type="entry name" value="Ribosomal_uL11_C"/>
</dbReference>
<dbReference type="InterPro" id="IPR036769">
    <property type="entry name" value="Ribosomal_uL11_C_sf"/>
</dbReference>
<dbReference type="InterPro" id="IPR020785">
    <property type="entry name" value="Ribosomal_uL11_CS"/>
</dbReference>
<dbReference type="InterPro" id="IPR020784">
    <property type="entry name" value="Ribosomal_uL11_N"/>
</dbReference>
<dbReference type="InterPro" id="IPR036796">
    <property type="entry name" value="Ribosomal_uL11_N_sf"/>
</dbReference>
<dbReference type="NCBIfam" id="TIGR01632">
    <property type="entry name" value="L11_bact"/>
    <property type="match status" value="1"/>
</dbReference>
<dbReference type="PANTHER" id="PTHR11661">
    <property type="entry name" value="60S RIBOSOMAL PROTEIN L12"/>
    <property type="match status" value="1"/>
</dbReference>
<dbReference type="PANTHER" id="PTHR11661:SF1">
    <property type="entry name" value="LARGE RIBOSOMAL SUBUNIT PROTEIN UL11M"/>
    <property type="match status" value="1"/>
</dbReference>
<dbReference type="Pfam" id="PF00298">
    <property type="entry name" value="Ribosomal_L11"/>
    <property type="match status" value="1"/>
</dbReference>
<dbReference type="Pfam" id="PF03946">
    <property type="entry name" value="Ribosomal_L11_N"/>
    <property type="match status" value="1"/>
</dbReference>
<dbReference type="SMART" id="SM00649">
    <property type="entry name" value="RL11"/>
    <property type="match status" value="1"/>
</dbReference>
<dbReference type="SUPFAM" id="SSF54747">
    <property type="entry name" value="Ribosomal L11/L12e N-terminal domain"/>
    <property type="match status" value="1"/>
</dbReference>
<dbReference type="SUPFAM" id="SSF46906">
    <property type="entry name" value="Ribosomal protein L11, C-terminal domain"/>
    <property type="match status" value="1"/>
</dbReference>
<dbReference type="PROSITE" id="PS00359">
    <property type="entry name" value="RIBOSOMAL_L11"/>
    <property type="match status" value="1"/>
</dbReference>
<evidence type="ECO:0000255" key="1">
    <source>
        <dbReference type="HAMAP-Rule" id="MF_00736"/>
    </source>
</evidence>
<evidence type="ECO:0000305" key="2"/>
<keyword id="KW-0488">Methylation</keyword>
<keyword id="KW-1185">Reference proteome</keyword>
<keyword id="KW-0687">Ribonucleoprotein</keyword>
<keyword id="KW-0689">Ribosomal protein</keyword>
<keyword id="KW-0694">RNA-binding</keyword>
<keyword id="KW-0699">rRNA-binding</keyword>
<comment type="function">
    <text evidence="1">Forms part of the ribosomal stalk which helps the ribosome interact with GTP-bound translation factors.</text>
</comment>
<comment type="subunit">
    <text evidence="1">Part of the ribosomal stalk of the 50S ribosomal subunit. Interacts with L10 and the large rRNA to form the base of the stalk. L10 forms an elongated spine to which L12 dimers bind in a sequential fashion forming a multimeric L10(L12)X complex.</text>
</comment>
<comment type="PTM">
    <text evidence="1">One or more lysine residues are methylated.</text>
</comment>
<comment type="similarity">
    <text evidence="1">Belongs to the universal ribosomal protein uL11 family.</text>
</comment>
<accession>Q21SF3</accession>
<sequence length="143" mass="14860">MAKKIVGFVKLQVPAGKANPSPPIGPALGQRGLNIMEFCKAFNAQTQGIEPGLPLPVVITAFADKSFTFVIKSPPSSILIKKAVGVTKGSATPQSVKVGKITRAQLEEIAKTKMKDLTAADMDAAVRTIAGSARSMGVNVEGV</sequence>
<proteinExistence type="inferred from homology"/>
<gene>
    <name evidence="1" type="primary">rplK</name>
    <name type="ordered locus">Rfer_3596</name>
</gene>
<reference key="1">
    <citation type="submission" date="2006-02" db="EMBL/GenBank/DDBJ databases">
        <title>Complete sequence of chromosome of Rhodoferax ferrireducens DSM 15236.</title>
        <authorList>
            <person name="Copeland A."/>
            <person name="Lucas S."/>
            <person name="Lapidus A."/>
            <person name="Barry K."/>
            <person name="Detter J.C."/>
            <person name="Glavina del Rio T."/>
            <person name="Hammon N."/>
            <person name="Israni S."/>
            <person name="Pitluck S."/>
            <person name="Brettin T."/>
            <person name="Bruce D."/>
            <person name="Han C."/>
            <person name="Tapia R."/>
            <person name="Gilna P."/>
            <person name="Kiss H."/>
            <person name="Schmutz J."/>
            <person name="Larimer F."/>
            <person name="Land M."/>
            <person name="Kyrpides N."/>
            <person name="Ivanova N."/>
            <person name="Richardson P."/>
        </authorList>
    </citation>
    <scope>NUCLEOTIDE SEQUENCE [LARGE SCALE GENOMIC DNA]</scope>
    <source>
        <strain>ATCC BAA-621 / DSM 15236 / T118</strain>
    </source>
</reference>